<accession>Q9VYS4</accession>
<name>GLD2B_DROME</name>
<comment type="function">
    <text evidence="3 4 5 6 7">Cytoplasmic poly(A) RNA polymerase that adds successive AMP monomers to the 3'-end of specific maternal RNAs (bcd, Tl, and tor), forming a poly(A) tail, during late oogenesis and early embryogenesis (PubMed:18430932, PubMed:18434412, PubMed:29317541). In contrast to the canonical nuclear poly(A) RNA polymerase, it only adds poly(A) to selected cytoplasmic mRNAs (PubMed:18430932, PubMed:18434412). Required for localization of mRNAs to both poles of the egg, to recruit or maintain known centrosomal proteins with two types of microtubule organizing centers (MTOCs): the central MTOC that forms between the meiosis II tandem spindles and the centrosomes of the mitotic spindle (PubMed:10747060). Required at the final stage of oogenesis for meiosis I metaphase arrest and for progression beyond this stage (PubMed:10747060, PubMed:12871909, PubMed:18434412). Functions with the RNA-binding protein Dcr-2 to promote cytoplasmic polyadenylation and translational activation of certain mRNAs such as Tl and r2d2 (PubMed:29317541). As a consequence, is involved in regulating Toll immune signaling and promoting resistance to fungal infection (PubMed:29317541).</text>
</comment>
<comment type="catalytic activity">
    <reaction evidence="6">
        <text>RNA(n) + ATP = RNA(n)-3'-adenine ribonucleotide + diphosphate</text>
        <dbReference type="Rhea" id="RHEA:11332"/>
        <dbReference type="Rhea" id="RHEA-COMP:14527"/>
        <dbReference type="Rhea" id="RHEA-COMP:17347"/>
        <dbReference type="ChEBI" id="CHEBI:30616"/>
        <dbReference type="ChEBI" id="CHEBI:33019"/>
        <dbReference type="ChEBI" id="CHEBI:140395"/>
        <dbReference type="ChEBI" id="CHEBI:173115"/>
        <dbReference type="EC" id="2.7.7.19"/>
    </reaction>
</comment>
<comment type="cofactor">
    <cofactor evidence="1">
        <name>Mg(2+)</name>
        <dbReference type="ChEBI" id="CHEBI:18420"/>
    </cofactor>
    <cofactor evidence="1">
        <name>Mn(2+)</name>
        <dbReference type="ChEBI" id="CHEBI:29035"/>
    </cofactor>
</comment>
<comment type="subunit">
    <text evidence="6 7">Interacts with orb, an RNA-binding protein, generating an ovarian cytoplasmic polyadenylation complex (PubMed:18434412). Interacts (via C-terminus) with Dcr-2 (PubMed:29317541).</text>
</comment>
<comment type="subcellular location">
    <subcellularLocation>
        <location evidence="3 5">Cytoplasm</location>
    </subcellularLocation>
</comment>
<comment type="tissue specificity">
    <text evidence="6">Expressed in ovaries. Not expressed in adult males.</text>
</comment>
<comment type="developmental stage">
    <text evidence="3 5 7">In embryos (at protein level) (PubMed:29317541). Expressed both maternally and zygotically (PubMed:10747060, PubMed:18430932).</text>
</comment>
<comment type="disruption phenotype">
    <text evidence="3 4 5">Pronuclear migration does not occur in activated eggs. Defects in spindle structures (abnormally shaped spindles, spindle spurs, ectopic spindles associated with lost chromosomes and mispositioning of the meiosis II spindles) correlated with very high frequencies of chromosome non-disjunction and loss. The polar body nuclei do not associate with their normal monastral arrays of microtubules, the sperm aster is reduced in size, and the centrosomes often dissociate from a mitotic spindle that forms in association with the male pronucleus.</text>
</comment>
<comment type="similarity">
    <text evidence="8">Belongs to the DNA polymerase type-B-like family. GLD2 subfamily.</text>
</comment>
<organism>
    <name type="scientific">Drosophila melanogaster</name>
    <name type="common">Fruit fly</name>
    <dbReference type="NCBI Taxonomy" id="7227"/>
    <lineage>
        <taxon>Eukaryota</taxon>
        <taxon>Metazoa</taxon>
        <taxon>Ecdysozoa</taxon>
        <taxon>Arthropoda</taxon>
        <taxon>Hexapoda</taxon>
        <taxon>Insecta</taxon>
        <taxon>Pterygota</taxon>
        <taxon>Neoptera</taxon>
        <taxon>Endopterygota</taxon>
        <taxon>Diptera</taxon>
        <taxon>Brachycera</taxon>
        <taxon>Muscomorpha</taxon>
        <taxon>Ephydroidea</taxon>
        <taxon>Drosophilidae</taxon>
        <taxon>Drosophila</taxon>
        <taxon>Sophophora</taxon>
    </lineage>
</organism>
<protein>
    <recommendedName>
        <fullName>Poly(A) RNA polymerase gld-2 homolog B</fullName>
        <ecNumber>2.7.7.19</ecNumber>
    </recommendedName>
    <alternativeName>
        <fullName>Protein wispy</fullName>
    </alternativeName>
</protein>
<dbReference type="EC" id="2.7.7.19"/>
<dbReference type="EMBL" id="AE014298">
    <property type="protein sequence ID" value="AAF48114.1"/>
    <property type="molecule type" value="Genomic_DNA"/>
</dbReference>
<dbReference type="RefSeq" id="NP_001285144.1">
    <property type="nucleotide sequence ID" value="NM_001298215.1"/>
</dbReference>
<dbReference type="RefSeq" id="NP_572766.1">
    <property type="nucleotide sequence ID" value="NM_132538.2"/>
</dbReference>
<dbReference type="SMR" id="Q9VYS4"/>
<dbReference type="BioGRID" id="58557">
    <property type="interactions" value="37"/>
</dbReference>
<dbReference type="FunCoup" id="Q9VYS4">
    <property type="interactions" value="9"/>
</dbReference>
<dbReference type="IntAct" id="Q9VYS4">
    <property type="interactions" value="1"/>
</dbReference>
<dbReference type="STRING" id="7227.FBpp0309611"/>
<dbReference type="GlyGen" id="Q9VYS4">
    <property type="glycosylation" value="2 sites"/>
</dbReference>
<dbReference type="PaxDb" id="7227-FBpp0073417"/>
<dbReference type="EnsemblMetazoa" id="FBtr0073573">
    <property type="protein sequence ID" value="FBpp0073417"/>
    <property type="gene ID" value="FBgn0260780"/>
</dbReference>
<dbReference type="EnsemblMetazoa" id="FBtr0342743">
    <property type="protein sequence ID" value="FBpp0309611"/>
    <property type="gene ID" value="FBgn0260780"/>
</dbReference>
<dbReference type="GeneID" id="32152"/>
<dbReference type="KEGG" id="dme:Dmel_CG15737"/>
<dbReference type="UCSC" id="CG15737-RA">
    <property type="organism name" value="d. melanogaster"/>
</dbReference>
<dbReference type="AGR" id="FB:FBgn0260780"/>
<dbReference type="CTD" id="32152"/>
<dbReference type="FlyBase" id="FBgn0260780">
    <property type="gene designation" value="wisp"/>
</dbReference>
<dbReference type="VEuPathDB" id="VectorBase:FBgn0260780"/>
<dbReference type="eggNOG" id="KOG2277">
    <property type="taxonomic scope" value="Eukaryota"/>
</dbReference>
<dbReference type="GeneTree" id="ENSGT00940000156640"/>
<dbReference type="InParanoid" id="Q9VYS4"/>
<dbReference type="OMA" id="SHANSPC"/>
<dbReference type="OrthoDB" id="2274644at2759"/>
<dbReference type="PhylomeDB" id="Q9VYS4"/>
<dbReference type="SignaLink" id="Q9VYS4"/>
<dbReference type="BioGRID-ORCS" id="32152">
    <property type="hits" value="0 hits in 1 CRISPR screen"/>
</dbReference>
<dbReference type="GenomeRNAi" id="32152"/>
<dbReference type="PRO" id="PR:Q9VYS4"/>
<dbReference type="Proteomes" id="UP000000803">
    <property type="component" value="Chromosome X"/>
</dbReference>
<dbReference type="Bgee" id="FBgn0260780">
    <property type="expression patterns" value="Expressed in egg cell and 60 other cell types or tissues"/>
</dbReference>
<dbReference type="ExpressionAtlas" id="Q9VYS4">
    <property type="expression patterns" value="baseline and differential"/>
</dbReference>
<dbReference type="GO" id="GO:0005737">
    <property type="term" value="C:cytoplasm"/>
    <property type="evidence" value="ECO:0000314"/>
    <property type="project" value="UniProtKB"/>
</dbReference>
<dbReference type="GO" id="GO:0005524">
    <property type="term" value="F:ATP binding"/>
    <property type="evidence" value="ECO:0007669"/>
    <property type="project" value="UniProtKB-KW"/>
</dbReference>
<dbReference type="GO" id="GO:0046872">
    <property type="term" value="F:metal ion binding"/>
    <property type="evidence" value="ECO:0007669"/>
    <property type="project" value="UniProtKB-KW"/>
</dbReference>
<dbReference type="GO" id="GO:1990817">
    <property type="term" value="F:poly(A) RNA polymerase activity"/>
    <property type="evidence" value="ECO:0000314"/>
    <property type="project" value="FlyBase"/>
</dbReference>
<dbReference type="GO" id="GO:0003723">
    <property type="term" value="F:RNA binding"/>
    <property type="evidence" value="ECO:0007669"/>
    <property type="project" value="UniProtKB-KW"/>
</dbReference>
<dbReference type="GO" id="GO:0180011">
    <property type="term" value="P:cytosolic mRNA polyadenylation"/>
    <property type="evidence" value="ECO:0000315"/>
    <property type="project" value="FlyBase"/>
</dbReference>
<dbReference type="GO" id="GO:0007343">
    <property type="term" value="P:egg activation"/>
    <property type="evidence" value="ECO:0000315"/>
    <property type="project" value="FlyBase"/>
</dbReference>
<dbReference type="GO" id="GO:0008298">
    <property type="term" value="P:intracellular mRNA localization"/>
    <property type="evidence" value="ECO:0000315"/>
    <property type="project" value="FlyBase"/>
</dbReference>
<dbReference type="GO" id="GO:0007052">
    <property type="term" value="P:mitotic spindle organization"/>
    <property type="evidence" value="ECO:0000315"/>
    <property type="project" value="FlyBase"/>
</dbReference>
<dbReference type="GO" id="GO:0031124">
    <property type="term" value="P:mRNA 3'-end processing"/>
    <property type="evidence" value="ECO:0000315"/>
    <property type="project" value="FlyBase"/>
</dbReference>
<dbReference type="GO" id="GO:0001556">
    <property type="term" value="P:oocyte maturation"/>
    <property type="evidence" value="ECO:0000315"/>
    <property type="project" value="FlyBase"/>
</dbReference>
<dbReference type="GO" id="GO:0048477">
    <property type="term" value="P:oogenesis"/>
    <property type="evidence" value="ECO:0000315"/>
    <property type="project" value="UniProtKB"/>
</dbReference>
<dbReference type="GO" id="GO:0006963">
    <property type="term" value="P:positive regulation of antibacterial peptide biosynthetic process"/>
    <property type="evidence" value="ECO:0000315"/>
    <property type="project" value="FlyBase"/>
</dbReference>
<dbReference type="GO" id="GO:0007344">
    <property type="term" value="P:pronuclear fusion"/>
    <property type="evidence" value="ECO:0000315"/>
    <property type="project" value="FlyBase"/>
</dbReference>
<dbReference type="GO" id="GO:0035046">
    <property type="term" value="P:pronuclear migration"/>
    <property type="evidence" value="ECO:0000315"/>
    <property type="project" value="FlyBase"/>
</dbReference>
<dbReference type="GO" id="GO:0031123">
    <property type="term" value="P:RNA 3'-end processing"/>
    <property type="evidence" value="ECO:0000318"/>
    <property type="project" value="GO_Central"/>
</dbReference>
<dbReference type="GO" id="GO:0035044">
    <property type="term" value="P:sperm aster formation"/>
    <property type="evidence" value="ECO:0000315"/>
    <property type="project" value="FlyBase"/>
</dbReference>
<dbReference type="GO" id="GO:0007056">
    <property type="term" value="P:spindle assembly involved in female meiosis"/>
    <property type="evidence" value="ECO:0000315"/>
    <property type="project" value="FlyBase"/>
</dbReference>
<dbReference type="CDD" id="cd05402">
    <property type="entry name" value="NT_PAP_TUTase"/>
    <property type="match status" value="1"/>
</dbReference>
<dbReference type="FunFam" id="3.30.460.10:FF:000022">
    <property type="entry name" value="poly(A) RNA polymerase GLD2 isoform X1"/>
    <property type="match status" value="1"/>
</dbReference>
<dbReference type="Gene3D" id="1.10.1410.10">
    <property type="match status" value="1"/>
</dbReference>
<dbReference type="Gene3D" id="3.30.460.10">
    <property type="entry name" value="Beta Polymerase, domain 2"/>
    <property type="match status" value="1"/>
</dbReference>
<dbReference type="InterPro" id="IPR054708">
    <property type="entry name" value="MTPAP-like_central"/>
</dbReference>
<dbReference type="InterPro" id="IPR043519">
    <property type="entry name" value="NT_sf"/>
</dbReference>
<dbReference type="InterPro" id="IPR002058">
    <property type="entry name" value="PAP_assoc"/>
</dbReference>
<dbReference type="PANTHER" id="PTHR12271">
    <property type="entry name" value="POLY A POLYMERASE CID PAP -RELATED"/>
    <property type="match status" value="1"/>
</dbReference>
<dbReference type="PANTHER" id="PTHR12271:SF40">
    <property type="entry name" value="POLY(A) RNA POLYMERASE GLD2"/>
    <property type="match status" value="1"/>
</dbReference>
<dbReference type="Pfam" id="PF22600">
    <property type="entry name" value="MTPAP-like_central"/>
    <property type="match status" value="1"/>
</dbReference>
<dbReference type="Pfam" id="PF03828">
    <property type="entry name" value="PAP_assoc"/>
    <property type="match status" value="1"/>
</dbReference>
<dbReference type="SUPFAM" id="SSF81301">
    <property type="entry name" value="Nucleotidyltransferase"/>
    <property type="match status" value="1"/>
</dbReference>
<dbReference type="SUPFAM" id="SSF81631">
    <property type="entry name" value="PAP/OAS1 substrate-binding domain"/>
    <property type="match status" value="1"/>
</dbReference>
<sequence length="1373" mass="151312">MFSTRISGDMKIFAADVAESSVTATCNTSVQQQQSQQLEFRTRMSAGSPSSKSGQCHLKFGKYNNKTANLLRQVNSCHSSNSSSNTSNNNNEAIKGQQQQPLHYCNSNNSHSWARKKYFGNGNSNNSLLQQQQQPSSFFQRQQQQHQMQMQQEKQATNNNDALMKNQNVVNAHVSDCKSSDSNNNSTSSSNNNSTISSNNNNTSSASNNNTGSSSSCSNRTKPAKWLNENSSSSSSSNNNNISCRNNNTSSIDTKRRNSSAGATAAYYRKSESESGSSEGAAESTETEATRTGGCNSNRTAESSSADGGTQATMGKSQDQEQDQTVKQRPRQQPLSFWKTNYPQTSATQLKDKETVAAVVSAAAVAAAAAAASASEQQQQQQSLSIEHRRNSGYQQHQQHNYYPYYYSQPKQLTIASFLQKEMLPDSTEKSSSNTGGSNMIRSSSNGNSNFSRHQYGHQSTGSGYQQQQQRYRNAQNVYQQYQHQQQHHAQQHTHPHFRRKHSDNGSGINKKMHYSPPGKSGDPADRSASGQQQHHHPHQQQKTIEILASSHFNAMHRRMQGGNNKNGYYQHSYNPMTGEVGSTPTRSEHQNIYNLTYIHVDTEATGEAASAAGSTPVVKPSLLSKPNISITPASSTTPTTVDRALLPAVRSVSAPASGSALPAPANHVRNMFPPPPLAMLGGHGLLSPVTTTTPTKMISCAQLDEAITAAAASGDKLSTSPSYNQAGHYIMPPQQQQQQQLSSHPIPTGTSSHPPPPPPPHMFFHFADGFCNPGQGHQAPPATMWPHSSSPCYPASYGSSCGSGTGAGTSPHNNDGNAGALRPASPALSSSSLGSESQWSGTSNRSRLGHNGHPSISPTPSALGSAQLSPHLAEMRVQHPLHQQHPPSHASHRPHGQMGGHAMSSYVPHRPPPPPHPSISSPNPTPVATGAGGPWYEMILPPDRYLAQARNIEVTVQPEKLICMCKYDNLSAEIWKRFRGAQQTHNKFKLKMRLWRYLYLWMHQPMFERYRICLVGSTITGFGTDSSDIDMCLLPEQGVHPHQHQYHQHHHFHNEKRTEALIILTLFNAVLKDTEVFQDFNLIEARVPILRFKDISNGIEVDLNFNNCVGIKNTYLLQLYAQMDWRTRPLVVIVKLWAQYHDINDAKRMTISSYSLVLMVLHYLQHACVPHVLPCLHSLYPEKFQLGQQDCLDLDLIEPIEPYQALNTQTLGEHLLGFFKYYSTFDFRNFAISIRTGGVLPVSTCRMAKSPKNDVYQWKELNIEEPFDLSNTARSVYDGPTFERVKAVFLISARRLDHTLDLATIFRPIHHVPEHFPQLQQHQQQFEQQLHHPISGQQRSAGGGGDGANPVPSTLNPDAASTFAETTAAHVA</sequence>
<gene>
    <name type="primary">wisp</name>
    <name type="ORF">CG15737</name>
</gene>
<proteinExistence type="evidence at protein level"/>
<evidence type="ECO:0000250" key="1"/>
<evidence type="ECO:0000256" key="2">
    <source>
        <dbReference type="SAM" id="MobiDB-lite"/>
    </source>
</evidence>
<evidence type="ECO:0000269" key="3">
    <source>
    </source>
</evidence>
<evidence type="ECO:0000269" key="4">
    <source>
    </source>
</evidence>
<evidence type="ECO:0000269" key="5">
    <source>
    </source>
</evidence>
<evidence type="ECO:0000269" key="6">
    <source>
    </source>
</evidence>
<evidence type="ECO:0000269" key="7">
    <source>
    </source>
</evidence>
<evidence type="ECO:0000305" key="8"/>
<keyword id="KW-0067">ATP-binding</keyword>
<keyword id="KW-0963">Cytoplasm</keyword>
<keyword id="KW-0460">Magnesium</keyword>
<keyword id="KW-0464">Manganese</keyword>
<keyword id="KW-0479">Metal-binding</keyword>
<keyword id="KW-0507">mRNA processing</keyword>
<keyword id="KW-0547">Nucleotide-binding</keyword>
<keyword id="KW-1185">Reference proteome</keyword>
<keyword id="KW-0694">RNA-binding</keyword>
<keyword id="KW-0808">Transferase</keyword>
<feature type="chain" id="PRO_0000341558" description="Poly(A) RNA polymerase gld-2 homolog B">
    <location>
        <begin position="1"/>
        <end position="1373"/>
    </location>
</feature>
<feature type="domain" description="PAP-associated">
    <location>
        <begin position="1211"/>
        <end position="1272"/>
    </location>
</feature>
<feature type="region of interest" description="Disordered" evidence="2">
    <location>
        <begin position="75"/>
        <end position="155"/>
    </location>
</feature>
<feature type="region of interest" description="Disordered" evidence="2">
    <location>
        <begin position="175"/>
        <end position="340"/>
    </location>
</feature>
<feature type="region of interest" description="Disordered" evidence="2">
    <location>
        <begin position="425"/>
        <end position="543"/>
    </location>
</feature>
<feature type="region of interest" description="Disordered" evidence="2">
    <location>
        <begin position="734"/>
        <end position="770"/>
    </location>
</feature>
<feature type="region of interest" description="Disordered" evidence="2">
    <location>
        <begin position="802"/>
        <end position="866"/>
    </location>
</feature>
<feature type="region of interest" description="Disordered" evidence="2">
    <location>
        <begin position="880"/>
        <end position="928"/>
    </location>
</feature>
<feature type="region of interest" description="Sufficent for interaction with Dcr-2" evidence="7">
    <location>
        <begin position="945"/>
        <end position="1373"/>
    </location>
</feature>
<feature type="region of interest" description="Disordered" evidence="2">
    <location>
        <begin position="1320"/>
        <end position="1359"/>
    </location>
</feature>
<feature type="compositionally biased region" description="Low complexity" evidence="2">
    <location>
        <begin position="75"/>
        <end position="91"/>
    </location>
</feature>
<feature type="compositionally biased region" description="Polar residues" evidence="2">
    <location>
        <begin position="96"/>
        <end position="112"/>
    </location>
</feature>
<feature type="compositionally biased region" description="Low complexity" evidence="2">
    <location>
        <begin position="130"/>
        <end position="152"/>
    </location>
</feature>
<feature type="compositionally biased region" description="Low complexity" evidence="2">
    <location>
        <begin position="180"/>
        <end position="219"/>
    </location>
</feature>
<feature type="compositionally biased region" description="Low complexity" evidence="2">
    <location>
        <begin position="228"/>
        <end position="251"/>
    </location>
</feature>
<feature type="compositionally biased region" description="Low complexity" evidence="2">
    <location>
        <begin position="274"/>
        <end position="284"/>
    </location>
</feature>
<feature type="compositionally biased region" description="Polar residues" evidence="2">
    <location>
        <begin position="295"/>
        <end position="340"/>
    </location>
</feature>
<feature type="compositionally biased region" description="Polar residues" evidence="2">
    <location>
        <begin position="430"/>
        <end position="442"/>
    </location>
</feature>
<feature type="compositionally biased region" description="Low complexity" evidence="2">
    <location>
        <begin position="443"/>
        <end position="485"/>
    </location>
</feature>
<feature type="compositionally biased region" description="Basic residues" evidence="2">
    <location>
        <begin position="486"/>
        <end position="502"/>
    </location>
</feature>
<feature type="compositionally biased region" description="Low complexity" evidence="2">
    <location>
        <begin position="735"/>
        <end position="753"/>
    </location>
</feature>
<feature type="compositionally biased region" description="Low complexity" evidence="2">
    <location>
        <begin position="819"/>
        <end position="844"/>
    </location>
</feature>
<feature type="compositionally biased region" description="Polar residues" evidence="2">
    <location>
        <begin position="855"/>
        <end position="866"/>
    </location>
</feature>
<feature type="compositionally biased region" description="Low complexity" evidence="2">
    <location>
        <begin position="880"/>
        <end position="890"/>
    </location>
</feature>
<feature type="compositionally biased region" description="Low complexity" evidence="2">
    <location>
        <begin position="1320"/>
        <end position="1341"/>
    </location>
</feature>
<feature type="binding site" evidence="1">
    <location>
        <position position="1029"/>
    </location>
    <ligand>
        <name>Mg(2+)</name>
        <dbReference type="ChEBI" id="CHEBI:18420"/>
        <note>catalytic</note>
    </ligand>
</feature>
<feature type="binding site" evidence="1">
    <location>
        <position position="1031"/>
    </location>
    <ligand>
        <name>Mg(2+)</name>
        <dbReference type="ChEBI" id="CHEBI:18420"/>
        <note>catalytic</note>
    </ligand>
</feature>
<reference key="1">
    <citation type="journal article" date="2000" name="Science">
        <title>The genome sequence of Drosophila melanogaster.</title>
        <authorList>
            <person name="Adams M.D."/>
            <person name="Celniker S.E."/>
            <person name="Holt R.A."/>
            <person name="Evans C.A."/>
            <person name="Gocayne J.D."/>
            <person name="Amanatides P.G."/>
            <person name="Scherer S.E."/>
            <person name="Li P.W."/>
            <person name="Hoskins R.A."/>
            <person name="Galle R.F."/>
            <person name="George R.A."/>
            <person name="Lewis S.E."/>
            <person name="Richards S."/>
            <person name="Ashburner M."/>
            <person name="Henderson S.N."/>
            <person name="Sutton G.G."/>
            <person name="Wortman J.R."/>
            <person name="Yandell M.D."/>
            <person name="Zhang Q."/>
            <person name="Chen L.X."/>
            <person name="Brandon R.C."/>
            <person name="Rogers Y.-H.C."/>
            <person name="Blazej R.G."/>
            <person name="Champe M."/>
            <person name="Pfeiffer B.D."/>
            <person name="Wan K.H."/>
            <person name="Doyle C."/>
            <person name="Baxter E.G."/>
            <person name="Helt G."/>
            <person name="Nelson C.R."/>
            <person name="Miklos G.L.G."/>
            <person name="Abril J.F."/>
            <person name="Agbayani A."/>
            <person name="An H.-J."/>
            <person name="Andrews-Pfannkoch C."/>
            <person name="Baldwin D."/>
            <person name="Ballew R.M."/>
            <person name="Basu A."/>
            <person name="Baxendale J."/>
            <person name="Bayraktaroglu L."/>
            <person name="Beasley E.M."/>
            <person name="Beeson K.Y."/>
            <person name="Benos P.V."/>
            <person name="Berman B.P."/>
            <person name="Bhandari D."/>
            <person name="Bolshakov S."/>
            <person name="Borkova D."/>
            <person name="Botchan M.R."/>
            <person name="Bouck J."/>
            <person name="Brokstein P."/>
            <person name="Brottier P."/>
            <person name="Burtis K.C."/>
            <person name="Busam D.A."/>
            <person name="Butler H."/>
            <person name="Cadieu E."/>
            <person name="Center A."/>
            <person name="Chandra I."/>
            <person name="Cherry J.M."/>
            <person name="Cawley S."/>
            <person name="Dahlke C."/>
            <person name="Davenport L.B."/>
            <person name="Davies P."/>
            <person name="de Pablos B."/>
            <person name="Delcher A."/>
            <person name="Deng Z."/>
            <person name="Mays A.D."/>
            <person name="Dew I."/>
            <person name="Dietz S.M."/>
            <person name="Dodson K."/>
            <person name="Doup L.E."/>
            <person name="Downes M."/>
            <person name="Dugan-Rocha S."/>
            <person name="Dunkov B.C."/>
            <person name="Dunn P."/>
            <person name="Durbin K.J."/>
            <person name="Evangelista C.C."/>
            <person name="Ferraz C."/>
            <person name="Ferriera S."/>
            <person name="Fleischmann W."/>
            <person name="Fosler C."/>
            <person name="Gabrielian A.E."/>
            <person name="Garg N.S."/>
            <person name="Gelbart W.M."/>
            <person name="Glasser K."/>
            <person name="Glodek A."/>
            <person name="Gong F."/>
            <person name="Gorrell J.H."/>
            <person name="Gu Z."/>
            <person name="Guan P."/>
            <person name="Harris M."/>
            <person name="Harris N.L."/>
            <person name="Harvey D.A."/>
            <person name="Heiman T.J."/>
            <person name="Hernandez J.R."/>
            <person name="Houck J."/>
            <person name="Hostin D."/>
            <person name="Houston K.A."/>
            <person name="Howland T.J."/>
            <person name="Wei M.-H."/>
            <person name="Ibegwam C."/>
            <person name="Jalali M."/>
            <person name="Kalush F."/>
            <person name="Karpen G.H."/>
            <person name="Ke Z."/>
            <person name="Kennison J.A."/>
            <person name="Ketchum K.A."/>
            <person name="Kimmel B.E."/>
            <person name="Kodira C.D."/>
            <person name="Kraft C.L."/>
            <person name="Kravitz S."/>
            <person name="Kulp D."/>
            <person name="Lai Z."/>
            <person name="Lasko P."/>
            <person name="Lei Y."/>
            <person name="Levitsky A.A."/>
            <person name="Li J.H."/>
            <person name="Li Z."/>
            <person name="Liang Y."/>
            <person name="Lin X."/>
            <person name="Liu X."/>
            <person name="Mattei B."/>
            <person name="McIntosh T.C."/>
            <person name="McLeod M.P."/>
            <person name="McPherson D."/>
            <person name="Merkulov G."/>
            <person name="Milshina N.V."/>
            <person name="Mobarry C."/>
            <person name="Morris J."/>
            <person name="Moshrefi A."/>
            <person name="Mount S.M."/>
            <person name="Moy M."/>
            <person name="Murphy B."/>
            <person name="Murphy L."/>
            <person name="Muzny D.M."/>
            <person name="Nelson D.L."/>
            <person name="Nelson D.R."/>
            <person name="Nelson K.A."/>
            <person name="Nixon K."/>
            <person name="Nusskern D.R."/>
            <person name="Pacleb J.M."/>
            <person name="Palazzolo M."/>
            <person name="Pittman G.S."/>
            <person name="Pan S."/>
            <person name="Pollard J."/>
            <person name="Puri V."/>
            <person name="Reese M.G."/>
            <person name="Reinert K."/>
            <person name="Remington K."/>
            <person name="Saunders R.D.C."/>
            <person name="Scheeler F."/>
            <person name="Shen H."/>
            <person name="Shue B.C."/>
            <person name="Siden-Kiamos I."/>
            <person name="Simpson M."/>
            <person name="Skupski M.P."/>
            <person name="Smith T.J."/>
            <person name="Spier E."/>
            <person name="Spradling A.C."/>
            <person name="Stapleton M."/>
            <person name="Strong R."/>
            <person name="Sun E."/>
            <person name="Svirskas R."/>
            <person name="Tector C."/>
            <person name="Turner R."/>
            <person name="Venter E."/>
            <person name="Wang A.H."/>
            <person name="Wang X."/>
            <person name="Wang Z.-Y."/>
            <person name="Wassarman D.A."/>
            <person name="Weinstock G.M."/>
            <person name="Weissenbach J."/>
            <person name="Williams S.M."/>
            <person name="Woodage T."/>
            <person name="Worley K.C."/>
            <person name="Wu D."/>
            <person name="Yang S."/>
            <person name="Yao Q.A."/>
            <person name="Ye J."/>
            <person name="Yeh R.-F."/>
            <person name="Zaveri J.S."/>
            <person name="Zhan M."/>
            <person name="Zhang G."/>
            <person name="Zhao Q."/>
            <person name="Zheng L."/>
            <person name="Zheng X.H."/>
            <person name="Zhong F.N."/>
            <person name="Zhong W."/>
            <person name="Zhou X."/>
            <person name="Zhu S.C."/>
            <person name="Zhu X."/>
            <person name="Smith H.O."/>
            <person name="Gibbs R.A."/>
            <person name="Myers E.W."/>
            <person name="Rubin G.M."/>
            <person name="Venter J.C."/>
        </authorList>
    </citation>
    <scope>NUCLEOTIDE SEQUENCE [LARGE SCALE GENOMIC DNA]</scope>
    <source>
        <strain>Berkeley</strain>
    </source>
</reference>
<reference key="2">
    <citation type="journal article" date="2002" name="Genome Biol.">
        <title>Annotation of the Drosophila melanogaster euchromatic genome: a systematic review.</title>
        <authorList>
            <person name="Misra S."/>
            <person name="Crosby M.A."/>
            <person name="Mungall C.J."/>
            <person name="Matthews B.B."/>
            <person name="Campbell K.S."/>
            <person name="Hradecky P."/>
            <person name="Huang Y."/>
            <person name="Kaminker J.S."/>
            <person name="Millburn G.H."/>
            <person name="Prochnik S.E."/>
            <person name="Smith C.D."/>
            <person name="Tupy J.L."/>
            <person name="Whitfield E.J."/>
            <person name="Bayraktaroglu L."/>
            <person name="Berman B.P."/>
            <person name="Bettencourt B.R."/>
            <person name="Celniker S.E."/>
            <person name="de Grey A.D.N.J."/>
            <person name="Drysdale R.A."/>
            <person name="Harris N.L."/>
            <person name="Richter J."/>
            <person name="Russo S."/>
            <person name="Schroeder A.J."/>
            <person name="Shu S.Q."/>
            <person name="Stapleton M."/>
            <person name="Yamada C."/>
            <person name="Ashburner M."/>
            <person name="Gelbart W.M."/>
            <person name="Rubin G.M."/>
            <person name="Lewis S.E."/>
        </authorList>
    </citation>
    <scope>GENOME REANNOTATION</scope>
    <source>
        <strain>Berkeley</strain>
    </source>
</reference>
<reference key="3">
    <citation type="journal article" date="2000" name="Genetics">
        <title>The Drosophila wispy gene is required for RNA localization and other microtubule-based events of meiosis and early embryogenesis.</title>
        <authorList>
            <person name="Brent A.E."/>
            <person name="MacQueen A."/>
            <person name="Hazelrigg T."/>
        </authorList>
    </citation>
    <scope>FUNCTION</scope>
    <scope>SUBCELLULAR LOCATION</scope>
    <scope>DEVELOPMENTAL STAGE</scope>
    <scope>DISRUPTION PHENOTYPE</scope>
</reference>
<reference key="4">
    <citation type="journal article" date="2003" name="Genetics">
        <title>Regulation of maternal transcript destabilization during egg activation in Drosophila.</title>
        <authorList>
            <person name="Tadros W."/>
            <person name="Houston S.A."/>
            <person name="Bashirullah A."/>
            <person name="Cooperstock R.L."/>
            <person name="Semotok J.L."/>
            <person name="Reed B.H."/>
            <person name="Lipshitz H.D."/>
        </authorList>
    </citation>
    <scope>FUNCTION</scope>
    <scope>DISRUPTION PHENOTYPE</scope>
</reference>
<reference key="5">
    <citation type="journal article" date="2008" name="Development">
        <title>PAP- and GLD-2-type poly(A) polymerases are required sequentially in cytoplasmic polyadenylation and oogenesis in Drosophila.</title>
        <authorList>
            <person name="Benoit P."/>
            <person name="Papin C."/>
            <person name="Kwak J.E."/>
            <person name="Wickens M."/>
            <person name="Simonelig M."/>
        </authorList>
    </citation>
    <scope>FUNCTION</scope>
    <scope>CATALYTIC ACTIVITY</scope>
    <scope>INTERACTION WITH ORB</scope>
    <scope>TISSUE SPECIFICITY</scope>
</reference>
<reference key="6">
    <citation type="journal article" date="2008" name="Genetics">
        <title>Wispy, the Drosophila homolog of GLD-2, is required during oogenesis and egg activation.</title>
        <authorList>
            <person name="Cui J."/>
            <person name="Sackton K.L."/>
            <person name="Horner V.L."/>
            <person name="Kumar K.E."/>
            <person name="Wolfner M.F."/>
        </authorList>
    </citation>
    <scope>FUNCTION</scope>
    <scope>SUBCELLULAR LOCATION</scope>
    <scope>DEVELOPMENTAL STAGE</scope>
    <scope>DISRUPTION PHENOTYPE</scope>
</reference>
<reference key="7">
    <citation type="journal article" date="2018" name="RNA">
        <title>Dicer-2 promotes mRNA activation through cytoplasmic polyadenylation.</title>
        <authorList>
            <person name="Coll O."/>
            <person name="Guitart T."/>
            <person name="Villalba A."/>
            <person name="Papin C."/>
            <person name="Simonelig M."/>
            <person name="Gebauer F."/>
        </authorList>
    </citation>
    <scope>FUNCTION</scope>
    <scope>INTERACTION WITH DCR-2</scope>
    <scope>DEVELOPMENTAL STAGE</scope>
    <scope>REGION</scope>
</reference>